<gene>
    <name type="primary">ldhb</name>
</gene>
<dbReference type="EC" id="1.1.1.27" evidence="2"/>
<dbReference type="EMBL" id="U07176">
    <property type="protein sequence ID" value="AAA50434.1"/>
    <property type="molecule type" value="mRNA"/>
</dbReference>
<dbReference type="PIR" id="I51655">
    <property type="entry name" value="I51655"/>
</dbReference>
<dbReference type="SMR" id="P42119"/>
<dbReference type="AGR" id="Xenbase:XB-GENE-5908692"/>
<dbReference type="Xenbase" id="XB-GENE-5908692">
    <property type="gene designation" value="ldhb.S"/>
</dbReference>
<dbReference type="UniPathway" id="UPA00554">
    <property type="reaction ID" value="UER00611"/>
</dbReference>
<dbReference type="Proteomes" id="UP000186698">
    <property type="component" value="Unplaced"/>
</dbReference>
<dbReference type="GO" id="GO:0005739">
    <property type="term" value="C:mitochondrion"/>
    <property type="evidence" value="ECO:0000318"/>
    <property type="project" value="GO_Central"/>
</dbReference>
<dbReference type="GO" id="GO:0004459">
    <property type="term" value="F:L-lactate dehydrogenase activity"/>
    <property type="evidence" value="ECO:0000318"/>
    <property type="project" value="GO_Central"/>
</dbReference>
<dbReference type="GO" id="GO:0006089">
    <property type="term" value="P:lactate metabolic process"/>
    <property type="evidence" value="ECO:0000318"/>
    <property type="project" value="GO_Central"/>
</dbReference>
<dbReference type="GO" id="GO:0006090">
    <property type="term" value="P:pyruvate metabolic process"/>
    <property type="evidence" value="ECO:0000318"/>
    <property type="project" value="GO_Central"/>
</dbReference>
<dbReference type="CDD" id="cd05293">
    <property type="entry name" value="LDH_1"/>
    <property type="match status" value="1"/>
</dbReference>
<dbReference type="FunFam" id="3.40.50.720:FF:000029">
    <property type="entry name" value="L-lactate dehydrogenase A chain"/>
    <property type="match status" value="1"/>
</dbReference>
<dbReference type="FunFam" id="3.90.110.10:FF:000003">
    <property type="entry name" value="L-lactate dehydrogenase A chain"/>
    <property type="match status" value="1"/>
</dbReference>
<dbReference type="Gene3D" id="3.90.110.10">
    <property type="entry name" value="Lactate dehydrogenase/glycoside hydrolase, family 4, C-terminal"/>
    <property type="match status" value="1"/>
</dbReference>
<dbReference type="Gene3D" id="3.40.50.720">
    <property type="entry name" value="NAD(P)-binding Rossmann-like Domain"/>
    <property type="match status" value="1"/>
</dbReference>
<dbReference type="HAMAP" id="MF_00488">
    <property type="entry name" value="Lactate_dehydrog"/>
    <property type="match status" value="1"/>
</dbReference>
<dbReference type="InterPro" id="IPR001557">
    <property type="entry name" value="L-lactate/malate_DH"/>
</dbReference>
<dbReference type="InterPro" id="IPR011304">
    <property type="entry name" value="L-lactate_DH"/>
</dbReference>
<dbReference type="InterPro" id="IPR018177">
    <property type="entry name" value="L-lactate_DH_AS"/>
</dbReference>
<dbReference type="InterPro" id="IPR022383">
    <property type="entry name" value="Lactate/malate_DH_C"/>
</dbReference>
<dbReference type="InterPro" id="IPR001236">
    <property type="entry name" value="Lactate/malate_DH_N"/>
</dbReference>
<dbReference type="InterPro" id="IPR015955">
    <property type="entry name" value="Lactate_DH/Glyco_Ohase_4_C"/>
</dbReference>
<dbReference type="InterPro" id="IPR036291">
    <property type="entry name" value="NAD(P)-bd_dom_sf"/>
</dbReference>
<dbReference type="NCBIfam" id="TIGR01771">
    <property type="entry name" value="L-LDH-NAD"/>
    <property type="match status" value="1"/>
</dbReference>
<dbReference type="NCBIfam" id="NF000824">
    <property type="entry name" value="PRK00066.1"/>
    <property type="match status" value="1"/>
</dbReference>
<dbReference type="PANTHER" id="PTHR43128">
    <property type="entry name" value="L-2-HYDROXYCARBOXYLATE DEHYDROGENASE (NAD(P)(+))"/>
    <property type="match status" value="1"/>
</dbReference>
<dbReference type="PANTHER" id="PTHR43128:SF2">
    <property type="entry name" value="L-LACTATE DEHYDROGENASE B CHAIN"/>
    <property type="match status" value="1"/>
</dbReference>
<dbReference type="Pfam" id="PF02866">
    <property type="entry name" value="Ldh_1_C"/>
    <property type="match status" value="1"/>
</dbReference>
<dbReference type="Pfam" id="PF00056">
    <property type="entry name" value="Ldh_1_N"/>
    <property type="match status" value="1"/>
</dbReference>
<dbReference type="PIRSF" id="PIRSF000102">
    <property type="entry name" value="Lac_mal_DH"/>
    <property type="match status" value="1"/>
</dbReference>
<dbReference type="PRINTS" id="PR00086">
    <property type="entry name" value="LLDHDRGNASE"/>
</dbReference>
<dbReference type="SUPFAM" id="SSF56327">
    <property type="entry name" value="LDH C-terminal domain-like"/>
    <property type="match status" value="1"/>
</dbReference>
<dbReference type="SUPFAM" id="SSF51735">
    <property type="entry name" value="NAD(P)-binding Rossmann-fold domains"/>
    <property type="match status" value="1"/>
</dbReference>
<dbReference type="PROSITE" id="PS00064">
    <property type="entry name" value="L_LDH"/>
    <property type="match status" value="1"/>
</dbReference>
<protein>
    <recommendedName>
        <fullName>L-lactate dehydrogenase B chain</fullName>
        <shortName>LDH-B</shortName>
        <ecNumber evidence="2">1.1.1.27</ecNumber>
    </recommendedName>
</protein>
<comment type="function">
    <text evidence="2">Interconverts simultaneously and stereospecifically pyruvate and lactate with concomitant interconversion of NADH and NAD(+).</text>
</comment>
<comment type="catalytic activity">
    <reaction evidence="2">
        <text>(S)-lactate + NAD(+) = pyruvate + NADH + H(+)</text>
        <dbReference type="Rhea" id="RHEA:23444"/>
        <dbReference type="ChEBI" id="CHEBI:15361"/>
        <dbReference type="ChEBI" id="CHEBI:15378"/>
        <dbReference type="ChEBI" id="CHEBI:16651"/>
        <dbReference type="ChEBI" id="CHEBI:57540"/>
        <dbReference type="ChEBI" id="CHEBI:57945"/>
        <dbReference type="EC" id="1.1.1.27"/>
    </reaction>
    <physiologicalReaction direction="left-to-right" evidence="2">
        <dbReference type="Rhea" id="RHEA:23445"/>
    </physiologicalReaction>
    <physiologicalReaction direction="right-to-left" evidence="2">
        <dbReference type="Rhea" id="RHEA:23446"/>
    </physiologicalReaction>
</comment>
<comment type="pathway">
    <text evidence="2">Fermentation; pyruvate fermentation to lactate; (S)-lactate from pyruvate: step 1/1.</text>
</comment>
<comment type="subunit">
    <text>Homotetramer.</text>
</comment>
<comment type="subcellular location">
    <subcellularLocation>
        <location evidence="1">Cytoplasm</location>
    </subcellularLocation>
</comment>
<comment type="similarity">
    <text evidence="3">Belongs to the LDH/MDH superfamily. LDH family.</text>
</comment>
<proteinExistence type="evidence at transcript level"/>
<name>LDHB_XENLA</name>
<organism>
    <name type="scientific">Xenopus laevis</name>
    <name type="common">African clawed frog</name>
    <dbReference type="NCBI Taxonomy" id="8355"/>
    <lineage>
        <taxon>Eukaryota</taxon>
        <taxon>Metazoa</taxon>
        <taxon>Chordata</taxon>
        <taxon>Craniata</taxon>
        <taxon>Vertebrata</taxon>
        <taxon>Euteleostomi</taxon>
        <taxon>Amphibia</taxon>
        <taxon>Batrachia</taxon>
        <taxon>Anura</taxon>
        <taxon>Pipoidea</taxon>
        <taxon>Pipidae</taxon>
        <taxon>Xenopodinae</taxon>
        <taxon>Xenopus</taxon>
        <taxon>Xenopus</taxon>
    </lineage>
</organism>
<keyword id="KW-0963">Cytoplasm</keyword>
<keyword id="KW-0520">NAD</keyword>
<keyword id="KW-0560">Oxidoreductase</keyword>
<keyword id="KW-1185">Reference proteome</keyword>
<sequence>MSTVQEKLITNVCQDKAAKPTNKITIVGVGQVGMACAVSVLLKELADELALVDILEDKLKGEVMDLQHGSLFLKTPTIVADKDYSVTANSRIVVVTGGVPQQEGESRLNLVQRNVNVFKFIIPQVVKYSPDCIIIVVSNPVDILTYVTWKLSGLPQHRIIGSGTNLDSARFRHLISEKLGVHPSSCHGFILGEHGDTSVAVWSGVNVAGVSLQSLKPEIGTDQDSCNWKEVHKKVVDSAYEVIKLKGYTNWAIGFSVAEIVESITKNLGRVHPVSTMVKGMYGIETEVFLSLPCVLNGNGLTSVINQKLKDDEVGQLQKSAETLWGIQKDLKDL</sequence>
<feature type="initiator methionine" description="Removed" evidence="1">
    <location>
        <position position="1"/>
    </location>
</feature>
<feature type="chain" id="PRO_0000168486" description="L-lactate dehydrogenase B chain">
    <location>
        <begin position="2"/>
        <end position="334"/>
    </location>
</feature>
<feature type="active site" description="Proton acceptor" evidence="1">
    <location>
        <position position="194"/>
    </location>
</feature>
<feature type="binding site" evidence="1">
    <location>
        <begin position="30"/>
        <end position="58"/>
    </location>
    <ligand>
        <name>NAD(+)</name>
        <dbReference type="ChEBI" id="CHEBI:57540"/>
    </ligand>
</feature>
<feature type="binding site" evidence="1">
    <location>
        <position position="107"/>
    </location>
    <ligand>
        <name>substrate</name>
    </ligand>
</feature>
<feature type="binding site" evidence="1">
    <location>
        <position position="139"/>
    </location>
    <ligand>
        <name>NAD(+)</name>
        <dbReference type="ChEBI" id="CHEBI:57540"/>
    </ligand>
</feature>
<feature type="binding site" evidence="1">
    <location>
        <position position="139"/>
    </location>
    <ligand>
        <name>substrate</name>
    </ligand>
</feature>
<feature type="binding site" evidence="1">
    <location>
        <position position="170"/>
    </location>
    <ligand>
        <name>substrate</name>
    </ligand>
</feature>
<feature type="binding site" evidence="1">
    <location>
        <position position="249"/>
    </location>
    <ligand>
        <name>substrate</name>
    </ligand>
</feature>
<evidence type="ECO:0000250" key="1"/>
<evidence type="ECO:0000250" key="2">
    <source>
        <dbReference type="UniProtKB" id="P07195"/>
    </source>
</evidence>
<evidence type="ECO:0000305" key="3"/>
<reference key="1">
    <citation type="journal article" date="1994" name="Proc. Natl. Acad. Sci. U.S.A.">
        <title>Evolutionary relationships of lactate dehydrogenases (LDHs) from mammals, birds, an amphibian, fish, barley, and bacteria: LDH cDNA sequences from Xenopus, pig, and rat.</title>
        <authorList>
            <person name="Tsuji S."/>
            <person name="Qureshi M.A."/>
            <person name="Hou E.W."/>
            <person name="Fitch W.M."/>
            <person name="Li S.S.-L."/>
        </authorList>
    </citation>
    <scope>NUCLEOTIDE SEQUENCE [MRNA]</scope>
    <source>
        <tissue>Liver</tissue>
    </source>
</reference>
<accession>P42119</accession>